<keyword id="KW-0249">Electron transport</keyword>
<keyword id="KW-0472">Membrane</keyword>
<keyword id="KW-0602">Photosynthesis</keyword>
<keyword id="KW-0793">Thylakoid</keyword>
<keyword id="KW-0812">Transmembrane</keyword>
<keyword id="KW-1133">Transmembrane helix</keyword>
<keyword id="KW-0813">Transport</keyword>
<sequence length="34" mass="3678">MELLTFGWAALLAVFTFSLAMVVWGRNGDGSIGF</sequence>
<evidence type="ECO:0000255" key="1">
    <source>
        <dbReference type="HAMAP-Rule" id="MF_00395"/>
    </source>
</evidence>
<feature type="chain" id="PRO_1000049580" description="Cytochrome b6-f complex subunit 8">
    <location>
        <begin position="1"/>
        <end position="34"/>
    </location>
</feature>
<feature type="transmembrane region" description="Helical" evidence="1">
    <location>
        <begin position="3"/>
        <end position="23"/>
    </location>
</feature>
<comment type="function">
    <text evidence="1">Component of the cytochrome b6-f complex, which mediates electron transfer between photosystem II (PSII) and photosystem I (PSI), cyclic electron flow around PSI, and state transitions.</text>
</comment>
<comment type="subunit">
    <text evidence="1">The 4 large subunits of the cytochrome b6-f complex are cytochrome b6, subunit IV (17 kDa polypeptide, PetD), cytochrome f and the Rieske protein, while the 4 small subunits are PetG, PetL, PetM and PetN. The complex functions as a dimer.</text>
</comment>
<comment type="subcellular location">
    <subcellularLocation>
        <location evidence="1">Cellular thylakoid membrane</location>
        <topology evidence="1">Single-pass membrane protein</topology>
    </subcellularLocation>
</comment>
<comment type="similarity">
    <text evidence="1">Belongs to the PetN family.</text>
</comment>
<dbReference type="EMBL" id="AP008231">
    <property type="protein sequence ID" value="BAD79234.1"/>
    <property type="molecule type" value="Genomic_DNA"/>
</dbReference>
<dbReference type="RefSeq" id="WP_011243356.1">
    <property type="nucleotide sequence ID" value="NZ_CP085785.1"/>
</dbReference>
<dbReference type="SMR" id="Q5N386"/>
<dbReference type="GeneID" id="72429298"/>
<dbReference type="KEGG" id="syc:syc1044_d"/>
<dbReference type="eggNOG" id="ENOG5033AQP">
    <property type="taxonomic scope" value="Bacteria"/>
</dbReference>
<dbReference type="Proteomes" id="UP000001175">
    <property type="component" value="Chromosome"/>
</dbReference>
<dbReference type="GO" id="GO:0009512">
    <property type="term" value="C:cytochrome b6f complex"/>
    <property type="evidence" value="ECO:0007669"/>
    <property type="project" value="InterPro"/>
</dbReference>
<dbReference type="GO" id="GO:0031676">
    <property type="term" value="C:plasma membrane-derived thylakoid membrane"/>
    <property type="evidence" value="ECO:0007669"/>
    <property type="project" value="UniProtKB-SubCell"/>
</dbReference>
<dbReference type="GO" id="GO:0045158">
    <property type="term" value="F:electron transporter, transferring electrons within cytochrome b6/f complex of photosystem II activity"/>
    <property type="evidence" value="ECO:0007669"/>
    <property type="project" value="InterPro"/>
</dbReference>
<dbReference type="GO" id="GO:0017004">
    <property type="term" value="P:cytochrome complex assembly"/>
    <property type="evidence" value="ECO:0007669"/>
    <property type="project" value="UniProtKB-UniRule"/>
</dbReference>
<dbReference type="GO" id="GO:0015979">
    <property type="term" value="P:photosynthesis"/>
    <property type="evidence" value="ECO:0007669"/>
    <property type="project" value="UniProtKB-KW"/>
</dbReference>
<dbReference type="HAMAP" id="MF_00395">
    <property type="entry name" value="Cytb6_f_PetN"/>
    <property type="match status" value="1"/>
</dbReference>
<dbReference type="InterPro" id="IPR036143">
    <property type="entry name" value="Cytochr_b6-f_cplx_su8_sf"/>
</dbReference>
<dbReference type="InterPro" id="IPR005497">
    <property type="entry name" value="Cytochrome_b6-f_cplx_su8"/>
</dbReference>
<dbReference type="NCBIfam" id="NF002709">
    <property type="entry name" value="PRK02529.1"/>
    <property type="match status" value="1"/>
</dbReference>
<dbReference type="NCBIfam" id="NF011331">
    <property type="entry name" value="PRK14747.1"/>
    <property type="match status" value="1"/>
</dbReference>
<dbReference type="Pfam" id="PF03742">
    <property type="entry name" value="PetN"/>
    <property type="match status" value="1"/>
</dbReference>
<dbReference type="SUPFAM" id="SSF103451">
    <property type="entry name" value="PetN subunit of the cytochrome b6f complex"/>
    <property type="match status" value="1"/>
</dbReference>
<organism>
    <name type="scientific">Synechococcus sp. (strain ATCC 27144 / PCC 6301 / SAUG 1402/1)</name>
    <name type="common">Anacystis nidulans</name>
    <dbReference type="NCBI Taxonomy" id="269084"/>
    <lineage>
        <taxon>Bacteria</taxon>
        <taxon>Bacillati</taxon>
        <taxon>Cyanobacteriota</taxon>
        <taxon>Cyanophyceae</taxon>
        <taxon>Synechococcales</taxon>
        <taxon>Synechococcaceae</taxon>
        <taxon>Synechococcus</taxon>
    </lineage>
</organism>
<reference key="1">
    <citation type="journal article" date="2007" name="Photosyn. Res.">
        <title>Complete nucleotide sequence of the freshwater unicellular cyanobacterium Synechococcus elongatus PCC 6301 chromosome: gene content and organization.</title>
        <authorList>
            <person name="Sugita C."/>
            <person name="Ogata K."/>
            <person name="Shikata M."/>
            <person name="Jikuya H."/>
            <person name="Takano J."/>
            <person name="Furumichi M."/>
            <person name="Kanehisa M."/>
            <person name="Omata T."/>
            <person name="Sugiura M."/>
            <person name="Sugita M."/>
        </authorList>
    </citation>
    <scope>NUCLEOTIDE SEQUENCE [LARGE SCALE GENOMIC DNA]</scope>
    <source>
        <strain>ATCC 27144 / PCC 6301 / SAUG 1402/1</strain>
    </source>
</reference>
<protein>
    <recommendedName>
        <fullName evidence="1">Cytochrome b6-f complex subunit 8</fullName>
    </recommendedName>
    <alternativeName>
        <fullName evidence="1">Cytochrome b6-f complex subunit PetN</fullName>
    </alternativeName>
    <alternativeName>
        <fullName evidence="1">Cytochrome b6-f complex subunit VIII</fullName>
    </alternativeName>
</protein>
<proteinExistence type="inferred from homology"/>
<name>PETN_SYNP6</name>
<gene>
    <name evidence="1" type="primary">petN</name>
    <name type="ordered locus">syc1044_d</name>
</gene>
<accession>Q5N386</accession>